<proteinExistence type="evidence at protein level"/>
<keyword id="KW-0027">Amidation</keyword>
<keyword id="KW-0903">Direct protein sequencing</keyword>
<keyword id="KW-0527">Neuropeptide</keyword>
<keyword id="KW-0964">Secreted</keyword>
<protein>
    <recommendedName>
        <fullName>FMRFamide-17</fullName>
    </recommendedName>
    <alternativeName>
        <fullName evidence="3">LucFMRFamide-17</fullName>
    </alternativeName>
</protein>
<name>FAR17_LUCCU</name>
<reference evidence="4" key="1">
    <citation type="journal article" date="2009" name="Gen. Comp. Endocrinol.">
        <title>Extended FMRFamides in dipteran insects: conservative expression in the neuroendocrine system is accompanied by rapid sequence evolution.</title>
        <authorList>
            <person name="Rahman M.M."/>
            <person name="Fromm B."/>
            <person name="Neupert S."/>
            <person name="Kreusch S."/>
            <person name="Predel R."/>
        </authorList>
    </citation>
    <scope>PROTEIN SEQUENCE</scope>
    <scope>TISSUE SPECIFICITY</scope>
    <scope>MASS SPECTROMETRY</scope>
    <scope>AMIDATION AT PHE-7</scope>
    <source>
        <strain evidence="2">Bangladesh</strain>
        <strain evidence="2">Goondiwindi</strain>
        <tissue evidence="2">Dorsal ganglionic sheath</tissue>
    </source>
</reference>
<organism>
    <name type="scientific">Lucilia cuprina</name>
    <name type="common">Green bottle fly</name>
    <name type="synonym">Australian sheep blowfly</name>
    <dbReference type="NCBI Taxonomy" id="7375"/>
    <lineage>
        <taxon>Eukaryota</taxon>
        <taxon>Metazoa</taxon>
        <taxon>Ecdysozoa</taxon>
        <taxon>Arthropoda</taxon>
        <taxon>Hexapoda</taxon>
        <taxon>Insecta</taxon>
        <taxon>Pterygota</taxon>
        <taxon>Neoptera</taxon>
        <taxon>Endopterygota</taxon>
        <taxon>Diptera</taxon>
        <taxon>Brachycera</taxon>
        <taxon>Muscomorpha</taxon>
        <taxon>Oestroidea</taxon>
        <taxon>Calliphoridae</taxon>
        <taxon>Luciliinae</taxon>
        <taxon>Lucilia</taxon>
    </lineage>
</organism>
<accession>P85461</accession>
<dbReference type="GO" id="GO:0005576">
    <property type="term" value="C:extracellular region"/>
    <property type="evidence" value="ECO:0007669"/>
    <property type="project" value="UniProtKB-SubCell"/>
</dbReference>
<dbReference type="GO" id="GO:0007218">
    <property type="term" value="P:neuropeptide signaling pathway"/>
    <property type="evidence" value="ECO:0007669"/>
    <property type="project" value="UniProtKB-KW"/>
</dbReference>
<sequence length="7" mass="926">PDNFMRF</sequence>
<feature type="peptide" id="PRO_0000371758" description="FMRFamide-17">
    <location>
        <begin position="1"/>
        <end position="7"/>
    </location>
</feature>
<feature type="modified residue" description="Phenylalanine amide" evidence="2">
    <location>
        <position position="7"/>
    </location>
</feature>
<comment type="subcellular location">
    <subcellularLocation>
        <location evidence="4">Secreted</location>
    </subcellularLocation>
</comment>
<comment type="tissue specificity">
    <text evidence="2">Detected in the thoracic perisympathetic organs in larvae, and the dorsal ganglionic sheath in adults (at protein level).</text>
</comment>
<comment type="mass spectrometry" mass="925.46" method="MALDI" evidence="2"/>
<comment type="similarity">
    <text evidence="1">Belongs to the FARP (FMRFamide related peptide) family.</text>
</comment>
<evidence type="ECO:0000255" key="1"/>
<evidence type="ECO:0000269" key="2">
    <source>
    </source>
</evidence>
<evidence type="ECO:0000303" key="3">
    <source>
    </source>
</evidence>
<evidence type="ECO:0000305" key="4"/>